<comment type="function">
    <text evidence="1">Catalyzes the GTP-dependent ribosomal translocation step during translation elongation. During this step, the ribosome changes from the pre-translocational (PRE) to the post-translocational (POST) state as the newly formed A-site-bound peptidyl-tRNA and P-site-bound deacylated tRNA move to the P and E sites, respectively. Catalyzes the coordinated movement of the two tRNA molecules, the mRNA and conformational changes in the ribosome.</text>
</comment>
<comment type="subcellular location">
    <subcellularLocation>
        <location evidence="1">Cytoplasm</location>
    </subcellularLocation>
</comment>
<comment type="similarity">
    <text evidence="1">Belongs to the TRAFAC class translation factor GTPase superfamily. Classic translation factor GTPase family. EF-G/EF-2 subfamily.</text>
</comment>
<accession>Q7VRN9</accession>
<feature type="chain" id="PRO_0000091099" description="Elongation factor G">
    <location>
        <begin position="1"/>
        <end position="709"/>
    </location>
</feature>
<feature type="domain" description="tr-type G">
    <location>
        <begin position="9"/>
        <end position="292"/>
    </location>
</feature>
<feature type="binding site" evidence="1">
    <location>
        <begin position="18"/>
        <end position="25"/>
    </location>
    <ligand>
        <name>GTP</name>
        <dbReference type="ChEBI" id="CHEBI:37565"/>
    </ligand>
</feature>
<feature type="binding site" evidence="1">
    <location>
        <begin position="89"/>
        <end position="93"/>
    </location>
    <ligand>
        <name>GTP</name>
        <dbReference type="ChEBI" id="CHEBI:37565"/>
    </ligand>
</feature>
<feature type="binding site" evidence="1">
    <location>
        <begin position="143"/>
        <end position="146"/>
    </location>
    <ligand>
        <name>GTP</name>
        <dbReference type="ChEBI" id="CHEBI:37565"/>
    </ligand>
</feature>
<dbReference type="EMBL" id="BX248583">
    <property type="protein sequence ID" value="CAD83247.1"/>
    <property type="molecule type" value="Genomic_DNA"/>
</dbReference>
<dbReference type="SMR" id="Q7VRN9"/>
<dbReference type="STRING" id="203907.Bfl565"/>
<dbReference type="KEGG" id="bfl:Bfl565"/>
<dbReference type="eggNOG" id="COG0480">
    <property type="taxonomic scope" value="Bacteria"/>
</dbReference>
<dbReference type="HOGENOM" id="CLU_002794_4_1_6"/>
<dbReference type="OrthoDB" id="9804431at2"/>
<dbReference type="Proteomes" id="UP000002192">
    <property type="component" value="Chromosome"/>
</dbReference>
<dbReference type="GO" id="GO:0005737">
    <property type="term" value="C:cytoplasm"/>
    <property type="evidence" value="ECO:0007669"/>
    <property type="project" value="UniProtKB-SubCell"/>
</dbReference>
<dbReference type="GO" id="GO:0005525">
    <property type="term" value="F:GTP binding"/>
    <property type="evidence" value="ECO:0007669"/>
    <property type="project" value="UniProtKB-UniRule"/>
</dbReference>
<dbReference type="GO" id="GO:0003924">
    <property type="term" value="F:GTPase activity"/>
    <property type="evidence" value="ECO:0007669"/>
    <property type="project" value="InterPro"/>
</dbReference>
<dbReference type="GO" id="GO:0097216">
    <property type="term" value="F:guanosine tetraphosphate binding"/>
    <property type="evidence" value="ECO:0007669"/>
    <property type="project" value="UniProtKB-ARBA"/>
</dbReference>
<dbReference type="GO" id="GO:0003746">
    <property type="term" value="F:translation elongation factor activity"/>
    <property type="evidence" value="ECO:0007669"/>
    <property type="project" value="UniProtKB-UniRule"/>
</dbReference>
<dbReference type="GO" id="GO:0032790">
    <property type="term" value="P:ribosome disassembly"/>
    <property type="evidence" value="ECO:0007669"/>
    <property type="project" value="TreeGrafter"/>
</dbReference>
<dbReference type="CDD" id="cd01886">
    <property type="entry name" value="EF-G"/>
    <property type="match status" value="1"/>
</dbReference>
<dbReference type="CDD" id="cd16262">
    <property type="entry name" value="EFG_III"/>
    <property type="match status" value="1"/>
</dbReference>
<dbReference type="CDD" id="cd01434">
    <property type="entry name" value="EFG_mtEFG1_IV"/>
    <property type="match status" value="1"/>
</dbReference>
<dbReference type="CDD" id="cd03713">
    <property type="entry name" value="EFG_mtEFG_C"/>
    <property type="match status" value="1"/>
</dbReference>
<dbReference type="CDD" id="cd04088">
    <property type="entry name" value="EFG_mtEFG_II"/>
    <property type="match status" value="1"/>
</dbReference>
<dbReference type="FunFam" id="2.40.30.10:FF:000006">
    <property type="entry name" value="Elongation factor G"/>
    <property type="match status" value="1"/>
</dbReference>
<dbReference type="FunFam" id="3.30.230.10:FF:000003">
    <property type="entry name" value="Elongation factor G"/>
    <property type="match status" value="1"/>
</dbReference>
<dbReference type="FunFam" id="3.30.70.240:FF:000001">
    <property type="entry name" value="Elongation factor G"/>
    <property type="match status" value="1"/>
</dbReference>
<dbReference type="FunFam" id="3.30.70.870:FF:000001">
    <property type="entry name" value="Elongation factor G"/>
    <property type="match status" value="1"/>
</dbReference>
<dbReference type="FunFam" id="3.40.50.300:FF:000029">
    <property type="entry name" value="Elongation factor G"/>
    <property type="match status" value="1"/>
</dbReference>
<dbReference type="Gene3D" id="3.30.230.10">
    <property type="match status" value="1"/>
</dbReference>
<dbReference type="Gene3D" id="3.30.70.240">
    <property type="match status" value="1"/>
</dbReference>
<dbReference type="Gene3D" id="3.30.70.870">
    <property type="entry name" value="Elongation Factor G (Translational Gtpase), domain 3"/>
    <property type="match status" value="1"/>
</dbReference>
<dbReference type="Gene3D" id="3.40.50.300">
    <property type="entry name" value="P-loop containing nucleotide triphosphate hydrolases"/>
    <property type="match status" value="1"/>
</dbReference>
<dbReference type="Gene3D" id="2.40.30.10">
    <property type="entry name" value="Translation factors"/>
    <property type="match status" value="1"/>
</dbReference>
<dbReference type="HAMAP" id="MF_00054_B">
    <property type="entry name" value="EF_G_EF_2_B"/>
    <property type="match status" value="1"/>
</dbReference>
<dbReference type="InterPro" id="IPR041095">
    <property type="entry name" value="EFG_II"/>
</dbReference>
<dbReference type="InterPro" id="IPR009022">
    <property type="entry name" value="EFG_III"/>
</dbReference>
<dbReference type="InterPro" id="IPR035647">
    <property type="entry name" value="EFG_III/V"/>
</dbReference>
<dbReference type="InterPro" id="IPR047872">
    <property type="entry name" value="EFG_IV"/>
</dbReference>
<dbReference type="InterPro" id="IPR035649">
    <property type="entry name" value="EFG_V"/>
</dbReference>
<dbReference type="InterPro" id="IPR000640">
    <property type="entry name" value="EFG_V-like"/>
</dbReference>
<dbReference type="InterPro" id="IPR004161">
    <property type="entry name" value="EFTu-like_2"/>
</dbReference>
<dbReference type="InterPro" id="IPR031157">
    <property type="entry name" value="G_TR_CS"/>
</dbReference>
<dbReference type="InterPro" id="IPR027417">
    <property type="entry name" value="P-loop_NTPase"/>
</dbReference>
<dbReference type="InterPro" id="IPR020568">
    <property type="entry name" value="Ribosomal_Su5_D2-typ_SF"/>
</dbReference>
<dbReference type="InterPro" id="IPR014721">
    <property type="entry name" value="Ribsml_uS5_D2-typ_fold_subgr"/>
</dbReference>
<dbReference type="InterPro" id="IPR005225">
    <property type="entry name" value="Small_GTP-bd"/>
</dbReference>
<dbReference type="InterPro" id="IPR000795">
    <property type="entry name" value="T_Tr_GTP-bd_dom"/>
</dbReference>
<dbReference type="InterPro" id="IPR009000">
    <property type="entry name" value="Transl_B-barrel_sf"/>
</dbReference>
<dbReference type="InterPro" id="IPR004540">
    <property type="entry name" value="Transl_elong_EFG/EF2"/>
</dbReference>
<dbReference type="InterPro" id="IPR005517">
    <property type="entry name" value="Transl_elong_EFG/EF2_IV"/>
</dbReference>
<dbReference type="NCBIfam" id="TIGR00484">
    <property type="entry name" value="EF-G"/>
    <property type="match status" value="1"/>
</dbReference>
<dbReference type="NCBIfam" id="NF009381">
    <property type="entry name" value="PRK12740.1-5"/>
    <property type="match status" value="1"/>
</dbReference>
<dbReference type="NCBIfam" id="TIGR00231">
    <property type="entry name" value="small_GTP"/>
    <property type="match status" value="1"/>
</dbReference>
<dbReference type="PANTHER" id="PTHR43261:SF1">
    <property type="entry name" value="RIBOSOME-RELEASING FACTOR 2, MITOCHONDRIAL"/>
    <property type="match status" value="1"/>
</dbReference>
<dbReference type="PANTHER" id="PTHR43261">
    <property type="entry name" value="TRANSLATION ELONGATION FACTOR G-RELATED"/>
    <property type="match status" value="1"/>
</dbReference>
<dbReference type="Pfam" id="PF00679">
    <property type="entry name" value="EFG_C"/>
    <property type="match status" value="1"/>
</dbReference>
<dbReference type="Pfam" id="PF14492">
    <property type="entry name" value="EFG_III"/>
    <property type="match status" value="1"/>
</dbReference>
<dbReference type="Pfam" id="PF03764">
    <property type="entry name" value="EFG_IV"/>
    <property type="match status" value="1"/>
</dbReference>
<dbReference type="Pfam" id="PF00009">
    <property type="entry name" value="GTP_EFTU"/>
    <property type="match status" value="1"/>
</dbReference>
<dbReference type="Pfam" id="PF03144">
    <property type="entry name" value="GTP_EFTU_D2"/>
    <property type="match status" value="1"/>
</dbReference>
<dbReference type="PRINTS" id="PR00315">
    <property type="entry name" value="ELONGATNFCT"/>
</dbReference>
<dbReference type="SMART" id="SM00838">
    <property type="entry name" value="EFG_C"/>
    <property type="match status" value="1"/>
</dbReference>
<dbReference type="SMART" id="SM00889">
    <property type="entry name" value="EFG_IV"/>
    <property type="match status" value="1"/>
</dbReference>
<dbReference type="SUPFAM" id="SSF54980">
    <property type="entry name" value="EF-G C-terminal domain-like"/>
    <property type="match status" value="2"/>
</dbReference>
<dbReference type="SUPFAM" id="SSF52540">
    <property type="entry name" value="P-loop containing nucleoside triphosphate hydrolases"/>
    <property type="match status" value="1"/>
</dbReference>
<dbReference type="SUPFAM" id="SSF54211">
    <property type="entry name" value="Ribosomal protein S5 domain 2-like"/>
    <property type="match status" value="1"/>
</dbReference>
<dbReference type="SUPFAM" id="SSF50447">
    <property type="entry name" value="Translation proteins"/>
    <property type="match status" value="1"/>
</dbReference>
<dbReference type="PROSITE" id="PS00301">
    <property type="entry name" value="G_TR_1"/>
    <property type="match status" value="1"/>
</dbReference>
<dbReference type="PROSITE" id="PS51722">
    <property type="entry name" value="G_TR_2"/>
    <property type="match status" value="1"/>
</dbReference>
<sequence length="709" mass="79449">MVIRITPIAYYRNIGISAHIDAGKTTTTERILFYTGVNHKIGEVHTGSATMDWMEQEQERGITITSAATTCFWSGMAKQFPVHRINIIDTPGHVDFTIEVERSMRVLDGVVMVYCGVGGVQPQSETVWRQANKYKVPRIAFVNKMDRMGANYLHVVEELKTKLFANPVPIQLAIGSENKFTGVVDLIKMKAINWNDSDQGVTFFYEDIPNDLIELSNFWRNHLVESAVEESEELLDKYLSNSTQLTEYDIKQALRKRVLKNEILLVTCGSAFKNKGVQSMLDAVVEYLPSPTDLVSVKGILKKDGCALEERYVKDSEPFSALAFKVATDPFVGNLTFFRVYSGVVNSGDSIFNSVKEKRERFGRIVQMHANKREEIKSVYAGDIAAAIGLKDVSTGDTLCDCNHPIILESMEFPDPVISVMVEAKTKLDQEKMGLALSRLSQEDPSFRVWIDQDSGQTIIAGMGELHLEILVERMRREFSIEANVGKPQVAYRETIRSVIKQEGKFIRQSGGRGQFGHVWLLLEPMNINNESSSDSYKFFNKIVGGVIPKEYIPAVDKGIQEQISNGVLAGYPIVGVSVTIFDGSYHEVDSSEIAFKIAGSIAFKEGFMRANPVLLEPIMKVEIETPEEYMGDVIADLNRRRGIISNLENSMNIGRIIHAKVPLSEMFGYATALRSQTQGRASHSMEFLKYNEVPNNIAQSIIESRRVK</sequence>
<keyword id="KW-0963">Cytoplasm</keyword>
<keyword id="KW-0251">Elongation factor</keyword>
<keyword id="KW-0342">GTP-binding</keyword>
<keyword id="KW-0547">Nucleotide-binding</keyword>
<keyword id="KW-0648">Protein biosynthesis</keyword>
<keyword id="KW-1185">Reference proteome</keyword>
<reference key="1">
    <citation type="journal article" date="2003" name="Proc. Natl. Acad. Sci. U.S.A.">
        <title>The genome sequence of Blochmannia floridanus: comparative analysis of reduced genomes.</title>
        <authorList>
            <person name="Gil R."/>
            <person name="Silva F.J."/>
            <person name="Zientz E."/>
            <person name="Delmotte F."/>
            <person name="Gonzalez-Candelas F."/>
            <person name="Latorre A."/>
            <person name="Rausell C."/>
            <person name="Kamerbeek J."/>
            <person name="Gadau J."/>
            <person name="Hoelldobler B."/>
            <person name="van Ham R.C.H.J."/>
            <person name="Gross R."/>
            <person name="Moya A."/>
        </authorList>
    </citation>
    <scope>NUCLEOTIDE SEQUENCE [LARGE SCALE GENOMIC DNA]</scope>
</reference>
<proteinExistence type="inferred from homology"/>
<name>EFG_BLOFL</name>
<evidence type="ECO:0000255" key="1">
    <source>
        <dbReference type="HAMAP-Rule" id="MF_00054"/>
    </source>
</evidence>
<protein>
    <recommendedName>
        <fullName evidence="1">Elongation factor G</fullName>
        <shortName evidence="1">EF-G</shortName>
    </recommendedName>
</protein>
<gene>
    <name evidence="1" type="primary">fusA</name>
    <name type="ordered locus">Bfl565</name>
</gene>
<organism>
    <name type="scientific">Blochmanniella floridana</name>
    <dbReference type="NCBI Taxonomy" id="203907"/>
    <lineage>
        <taxon>Bacteria</taxon>
        <taxon>Pseudomonadati</taxon>
        <taxon>Pseudomonadota</taxon>
        <taxon>Gammaproteobacteria</taxon>
        <taxon>Enterobacterales</taxon>
        <taxon>Enterobacteriaceae</taxon>
        <taxon>ant endosymbionts</taxon>
        <taxon>Candidatus Blochmanniella</taxon>
    </lineage>
</organism>